<sequence>MAVSSEQIKDLRERTGAGMMDCKKALEEKGGDIEKAVTYLREKGLAKAAKRAGRETGEGKVIAYVHGTGKTGVLVELNCETDFVANNEAFEALGKEIALQITAMSPLYVSEESIPKSEIENEMSVQKALLEKEGKKADQIEKILPGKMKKYYEDICLIHQKSIRDNSKTINDLLQEAIAKFGENITVGRFSRFQVGGN</sequence>
<feature type="chain" id="PRO_1000116754" description="Elongation factor Ts">
    <location>
        <begin position="1"/>
        <end position="198"/>
    </location>
</feature>
<feature type="region of interest" description="Involved in Mg(2+) ion dislocation from EF-Tu" evidence="1">
    <location>
        <begin position="81"/>
        <end position="84"/>
    </location>
</feature>
<protein>
    <recommendedName>
        <fullName evidence="1">Elongation factor Ts</fullName>
        <shortName evidence="1">EF-Ts</shortName>
    </recommendedName>
</protein>
<name>EFTS_LEPBP</name>
<reference key="1">
    <citation type="journal article" date="2008" name="PLoS ONE">
        <title>Genome sequence of the saprophyte Leptospira biflexa provides insights into the evolution of Leptospira and the pathogenesis of leptospirosis.</title>
        <authorList>
            <person name="Picardeau M."/>
            <person name="Bulach D.M."/>
            <person name="Bouchier C."/>
            <person name="Zuerner R.L."/>
            <person name="Zidane N."/>
            <person name="Wilson P.J."/>
            <person name="Creno S."/>
            <person name="Kuczek E.S."/>
            <person name="Bommezzadri S."/>
            <person name="Davis J.C."/>
            <person name="McGrath A."/>
            <person name="Johnson M.J."/>
            <person name="Boursaux-Eude C."/>
            <person name="Seemann T."/>
            <person name="Rouy Z."/>
            <person name="Coppel R.L."/>
            <person name="Rood J.I."/>
            <person name="Lajus A."/>
            <person name="Davies J.K."/>
            <person name="Medigue C."/>
            <person name="Adler B."/>
        </authorList>
    </citation>
    <scope>NUCLEOTIDE SEQUENCE [LARGE SCALE GENOMIC DNA]</scope>
    <source>
        <strain>Patoc 1 / ATCC 23582 / Paris</strain>
    </source>
</reference>
<proteinExistence type="inferred from homology"/>
<organism>
    <name type="scientific">Leptospira biflexa serovar Patoc (strain Patoc 1 / ATCC 23582 / Paris)</name>
    <dbReference type="NCBI Taxonomy" id="456481"/>
    <lineage>
        <taxon>Bacteria</taxon>
        <taxon>Pseudomonadati</taxon>
        <taxon>Spirochaetota</taxon>
        <taxon>Spirochaetia</taxon>
        <taxon>Leptospirales</taxon>
        <taxon>Leptospiraceae</taxon>
        <taxon>Leptospira</taxon>
    </lineage>
</organism>
<dbReference type="EMBL" id="CP000786">
    <property type="protein sequence ID" value="ABZ98695.1"/>
    <property type="molecule type" value="Genomic_DNA"/>
</dbReference>
<dbReference type="RefSeq" id="WP_012389555.1">
    <property type="nucleotide sequence ID" value="NC_010602.1"/>
</dbReference>
<dbReference type="SMR" id="B0SM65"/>
<dbReference type="STRING" id="456481.LEPBI_I2616"/>
<dbReference type="KEGG" id="lbi:LEPBI_I2616"/>
<dbReference type="HOGENOM" id="CLU_047155_1_1_12"/>
<dbReference type="OrthoDB" id="9808348at2"/>
<dbReference type="BioCyc" id="LBIF456481:LEPBI_RS12870-MONOMER"/>
<dbReference type="Proteomes" id="UP000001847">
    <property type="component" value="Chromosome I"/>
</dbReference>
<dbReference type="GO" id="GO:0005737">
    <property type="term" value="C:cytoplasm"/>
    <property type="evidence" value="ECO:0007669"/>
    <property type="project" value="UniProtKB-SubCell"/>
</dbReference>
<dbReference type="GO" id="GO:0003746">
    <property type="term" value="F:translation elongation factor activity"/>
    <property type="evidence" value="ECO:0007669"/>
    <property type="project" value="UniProtKB-UniRule"/>
</dbReference>
<dbReference type="CDD" id="cd14275">
    <property type="entry name" value="UBA_EF-Ts"/>
    <property type="match status" value="1"/>
</dbReference>
<dbReference type="FunFam" id="1.10.8.10:FF:000001">
    <property type="entry name" value="Elongation factor Ts"/>
    <property type="match status" value="1"/>
</dbReference>
<dbReference type="Gene3D" id="1.10.286.20">
    <property type="match status" value="1"/>
</dbReference>
<dbReference type="Gene3D" id="1.10.8.10">
    <property type="entry name" value="DNA helicase RuvA subunit, C-terminal domain"/>
    <property type="match status" value="1"/>
</dbReference>
<dbReference type="Gene3D" id="3.30.479.20">
    <property type="entry name" value="Elongation factor Ts, dimerisation domain"/>
    <property type="match status" value="1"/>
</dbReference>
<dbReference type="HAMAP" id="MF_00050">
    <property type="entry name" value="EF_Ts"/>
    <property type="match status" value="1"/>
</dbReference>
<dbReference type="InterPro" id="IPR036402">
    <property type="entry name" value="EF-Ts_dimer_sf"/>
</dbReference>
<dbReference type="InterPro" id="IPR001816">
    <property type="entry name" value="Transl_elong_EFTs/EF1B"/>
</dbReference>
<dbReference type="InterPro" id="IPR014039">
    <property type="entry name" value="Transl_elong_EFTs/EF1B_dimer"/>
</dbReference>
<dbReference type="InterPro" id="IPR018101">
    <property type="entry name" value="Transl_elong_Ts_CS"/>
</dbReference>
<dbReference type="InterPro" id="IPR009060">
    <property type="entry name" value="UBA-like_sf"/>
</dbReference>
<dbReference type="NCBIfam" id="TIGR00116">
    <property type="entry name" value="tsf"/>
    <property type="match status" value="1"/>
</dbReference>
<dbReference type="PANTHER" id="PTHR11741">
    <property type="entry name" value="ELONGATION FACTOR TS"/>
    <property type="match status" value="1"/>
</dbReference>
<dbReference type="PANTHER" id="PTHR11741:SF0">
    <property type="entry name" value="ELONGATION FACTOR TS, MITOCHONDRIAL"/>
    <property type="match status" value="1"/>
</dbReference>
<dbReference type="Pfam" id="PF00889">
    <property type="entry name" value="EF_TS"/>
    <property type="match status" value="1"/>
</dbReference>
<dbReference type="SUPFAM" id="SSF54713">
    <property type="entry name" value="Elongation factor Ts (EF-Ts), dimerisation domain"/>
    <property type="match status" value="1"/>
</dbReference>
<dbReference type="SUPFAM" id="SSF46934">
    <property type="entry name" value="UBA-like"/>
    <property type="match status" value="1"/>
</dbReference>
<dbReference type="PROSITE" id="PS01126">
    <property type="entry name" value="EF_TS_1"/>
    <property type="match status" value="1"/>
</dbReference>
<dbReference type="PROSITE" id="PS01127">
    <property type="entry name" value="EF_TS_2"/>
    <property type="match status" value="1"/>
</dbReference>
<gene>
    <name evidence="1" type="primary">tsf</name>
    <name type="ordered locus">LEPBI_I2616</name>
</gene>
<keyword id="KW-0963">Cytoplasm</keyword>
<keyword id="KW-0251">Elongation factor</keyword>
<keyword id="KW-0648">Protein biosynthesis</keyword>
<keyword id="KW-1185">Reference proteome</keyword>
<accession>B0SM65</accession>
<comment type="function">
    <text evidence="1">Associates with the EF-Tu.GDP complex and induces the exchange of GDP to GTP. It remains bound to the aminoacyl-tRNA.EF-Tu.GTP complex up to the GTP hydrolysis stage on the ribosome.</text>
</comment>
<comment type="subcellular location">
    <subcellularLocation>
        <location evidence="1">Cytoplasm</location>
    </subcellularLocation>
</comment>
<comment type="similarity">
    <text evidence="1">Belongs to the EF-Ts family.</text>
</comment>
<evidence type="ECO:0000255" key="1">
    <source>
        <dbReference type="HAMAP-Rule" id="MF_00050"/>
    </source>
</evidence>